<keyword id="KW-0963">Cytoplasm</keyword>
<keyword id="KW-0378">Hydrolase</keyword>
<keyword id="KW-0546">Nucleotide metabolism</keyword>
<name>NTPP_EHRRW</name>
<proteinExistence type="inferred from homology"/>
<comment type="function">
    <text evidence="1">Nucleoside triphosphate pyrophosphatase. May have a dual role in cell division arrest and in preventing the incorporation of modified nucleotides into cellular nucleic acids.</text>
</comment>
<comment type="catalytic activity">
    <reaction evidence="1">
        <text>a ribonucleoside 5'-triphosphate + H2O = a ribonucleoside 5'-phosphate + diphosphate + H(+)</text>
        <dbReference type="Rhea" id="RHEA:23996"/>
        <dbReference type="ChEBI" id="CHEBI:15377"/>
        <dbReference type="ChEBI" id="CHEBI:15378"/>
        <dbReference type="ChEBI" id="CHEBI:33019"/>
        <dbReference type="ChEBI" id="CHEBI:58043"/>
        <dbReference type="ChEBI" id="CHEBI:61557"/>
        <dbReference type="EC" id="3.6.1.9"/>
    </reaction>
</comment>
<comment type="catalytic activity">
    <reaction evidence="1">
        <text>a 2'-deoxyribonucleoside 5'-triphosphate + H2O = a 2'-deoxyribonucleoside 5'-phosphate + diphosphate + H(+)</text>
        <dbReference type="Rhea" id="RHEA:44644"/>
        <dbReference type="ChEBI" id="CHEBI:15377"/>
        <dbReference type="ChEBI" id="CHEBI:15378"/>
        <dbReference type="ChEBI" id="CHEBI:33019"/>
        <dbReference type="ChEBI" id="CHEBI:61560"/>
        <dbReference type="ChEBI" id="CHEBI:65317"/>
        <dbReference type="EC" id="3.6.1.9"/>
    </reaction>
</comment>
<comment type="cofactor">
    <cofactor evidence="1">
        <name>a divalent metal cation</name>
        <dbReference type="ChEBI" id="CHEBI:60240"/>
    </cofactor>
</comment>
<comment type="subcellular location">
    <subcellularLocation>
        <location evidence="1">Cytoplasm</location>
    </subcellularLocation>
</comment>
<comment type="similarity">
    <text evidence="1">Belongs to the Maf family.</text>
</comment>
<gene>
    <name type="ordered locus">Erum5100</name>
    <name type="ordered locus">ERWE_CDS_05350</name>
</gene>
<feature type="chain" id="PRO_0000267305" description="Nucleoside triphosphate pyrophosphatase">
    <location>
        <begin position="1"/>
        <end position="192"/>
    </location>
</feature>
<feature type="active site" description="Proton acceptor" evidence="1">
    <location>
        <position position="73"/>
    </location>
</feature>
<accession>Q5HB21</accession>
<accession>Q5FEM6</accession>
<sequence length="192" mass="21581">MFKFDNLILASSSKQRLCLLNQLGVLPGEIVIPNIDESPLKKELPKIYSMRVAKEKVIKVSLLYPKKFILGADTVVCCGRKILPKAETEDQAFEILELISGRRHRVYTSVYLYAPSKKLHYRSVMTVVKIKRLSVKEINSYILSGEWKGKAGACNIQGNAGKFVISINGSYSSVIGLPLYETYSILSQYFPI</sequence>
<protein>
    <recommendedName>
        <fullName evidence="1">Nucleoside triphosphate pyrophosphatase</fullName>
        <ecNumber evidence="1">3.6.1.9</ecNumber>
    </recommendedName>
    <alternativeName>
        <fullName evidence="1">Nucleotide pyrophosphatase</fullName>
        <shortName evidence="1">Nucleotide PPase</shortName>
    </alternativeName>
</protein>
<evidence type="ECO:0000255" key="1">
    <source>
        <dbReference type="HAMAP-Rule" id="MF_00528"/>
    </source>
</evidence>
<organism>
    <name type="scientific">Ehrlichia ruminantium (strain Welgevonden)</name>
    <dbReference type="NCBI Taxonomy" id="254945"/>
    <lineage>
        <taxon>Bacteria</taxon>
        <taxon>Pseudomonadati</taxon>
        <taxon>Pseudomonadota</taxon>
        <taxon>Alphaproteobacteria</taxon>
        <taxon>Rickettsiales</taxon>
        <taxon>Anaplasmataceae</taxon>
        <taxon>Ehrlichia</taxon>
    </lineage>
</organism>
<dbReference type="EC" id="3.6.1.9" evidence="1"/>
<dbReference type="EMBL" id="CR767821">
    <property type="protein sequence ID" value="CAH58239.1"/>
    <property type="molecule type" value="Genomic_DNA"/>
</dbReference>
<dbReference type="EMBL" id="CR925678">
    <property type="protein sequence ID" value="CAI27029.1"/>
    <property type="molecule type" value="Genomic_DNA"/>
</dbReference>
<dbReference type="RefSeq" id="WP_011155190.1">
    <property type="nucleotide sequence ID" value="NC_005295.2"/>
</dbReference>
<dbReference type="SMR" id="Q5HB21"/>
<dbReference type="GeneID" id="33057988"/>
<dbReference type="KEGG" id="eru:Erum5100"/>
<dbReference type="KEGG" id="erw:ERWE_CDS_05350"/>
<dbReference type="eggNOG" id="COG0424">
    <property type="taxonomic scope" value="Bacteria"/>
</dbReference>
<dbReference type="HOGENOM" id="CLU_040416_2_0_5"/>
<dbReference type="Proteomes" id="UP000001021">
    <property type="component" value="Chromosome"/>
</dbReference>
<dbReference type="GO" id="GO:0005737">
    <property type="term" value="C:cytoplasm"/>
    <property type="evidence" value="ECO:0007669"/>
    <property type="project" value="UniProtKB-SubCell"/>
</dbReference>
<dbReference type="GO" id="GO:0047429">
    <property type="term" value="F:nucleoside triphosphate diphosphatase activity"/>
    <property type="evidence" value="ECO:0007669"/>
    <property type="project" value="UniProtKB-EC"/>
</dbReference>
<dbReference type="GO" id="GO:0009117">
    <property type="term" value="P:nucleotide metabolic process"/>
    <property type="evidence" value="ECO:0007669"/>
    <property type="project" value="UniProtKB-KW"/>
</dbReference>
<dbReference type="CDD" id="cd00555">
    <property type="entry name" value="Maf"/>
    <property type="match status" value="1"/>
</dbReference>
<dbReference type="Gene3D" id="3.90.950.10">
    <property type="match status" value="1"/>
</dbReference>
<dbReference type="HAMAP" id="MF_00528">
    <property type="entry name" value="Maf"/>
    <property type="match status" value="1"/>
</dbReference>
<dbReference type="InterPro" id="IPR029001">
    <property type="entry name" value="ITPase-like_fam"/>
</dbReference>
<dbReference type="InterPro" id="IPR003697">
    <property type="entry name" value="Maf-like"/>
</dbReference>
<dbReference type="NCBIfam" id="TIGR00172">
    <property type="entry name" value="maf"/>
    <property type="match status" value="1"/>
</dbReference>
<dbReference type="NCBIfam" id="NF010946">
    <property type="entry name" value="PRK14366.1"/>
    <property type="match status" value="1"/>
</dbReference>
<dbReference type="PANTHER" id="PTHR43213">
    <property type="entry name" value="BIFUNCTIONAL DTTP/UTP PYROPHOSPHATASE/METHYLTRANSFERASE PROTEIN-RELATED"/>
    <property type="match status" value="1"/>
</dbReference>
<dbReference type="PANTHER" id="PTHR43213:SF5">
    <property type="entry name" value="BIFUNCTIONAL DTTP_UTP PYROPHOSPHATASE_METHYLTRANSFERASE PROTEIN-RELATED"/>
    <property type="match status" value="1"/>
</dbReference>
<dbReference type="Pfam" id="PF02545">
    <property type="entry name" value="Maf"/>
    <property type="match status" value="1"/>
</dbReference>
<dbReference type="PIRSF" id="PIRSF006305">
    <property type="entry name" value="Maf"/>
    <property type="match status" value="1"/>
</dbReference>
<dbReference type="SUPFAM" id="SSF52972">
    <property type="entry name" value="ITPase-like"/>
    <property type="match status" value="1"/>
</dbReference>
<reference key="1">
    <citation type="journal article" date="2005" name="Proc. Natl. Acad. Sci. U.S.A.">
        <title>The genome of the heartwater agent Ehrlichia ruminantium contains multiple tandem repeats of actively variable copy number.</title>
        <authorList>
            <person name="Collins N.E."/>
            <person name="Liebenberg J."/>
            <person name="de Villiers E.P."/>
            <person name="Brayton K.A."/>
            <person name="Louw E."/>
            <person name="Pretorius A."/>
            <person name="Faber F.E."/>
            <person name="van Heerden H."/>
            <person name="Josemans A."/>
            <person name="van Kleef M."/>
            <person name="Steyn H.C."/>
            <person name="van Strijp M.F."/>
            <person name="Zweygarth E."/>
            <person name="Jongejan F."/>
            <person name="Maillard J.C."/>
            <person name="Berthier D."/>
            <person name="Botha M."/>
            <person name="Joubert F."/>
            <person name="Corton C.H."/>
            <person name="Thomson N.R."/>
            <person name="Allsopp M.T."/>
            <person name="Allsopp B.A."/>
        </authorList>
    </citation>
    <scope>NUCLEOTIDE SEQUENCE [LARGE SCALE GENOMIC DNA]</scope>
    <source>
        <strain>Welgevonden</strain>
    </source>
</reference>
<reference key="2">
    <citation type="journal article" date="2006" name="J. Bacteriol.">
        <title>Comparative genomic analysis of three strains of Ehrlichia ruminantium reveals an active process of genome size plasticity.</title>
        <authorList>
            <person name="Frutos R."/>
            <person name="Viari A."/>
            <person name="Ferraz C."/>
            <person name="Morgat A."/>
            <person name="Eychenie S."/>
            <person name="Kandassamy Y."/>
            <person name="Chantal I."/>
            <person name="Bensaid A."/>
            <person name="Coissac E."/>
            <person name="Vachiery N."/>
            <person name="Demaille J."/>
            <person name="Martinez D."/>
        </authorList>
    </citation>
    <scope>NUCLEOTIDE SEQUENCE [LARGE SCALE GENOMIC DNA]</scope>
    <source>
        <strain>Welgevonden</strain>
    </source>
</reference>